<reference key="1">
    <citation type="journal article" date="2005" name="J. Bacteriol.">
        <title>Whole-genome sequence analysis of Pseudomonas syringae pv. phaseolicola 1448A reveals divergence among pathovars in genes involved in virulence and transposition.</title>
        <authorList>
            <person name="Joardar V."/>
            <person name="Lindeberg M."/>
            <person name="Jackson R.W."/>
            <person name="Selengut J."/>
            <person name="Dodson R."/>
            <person name="Brinkac L.M."/>
            <person name="Daugherty S.C."/>
            <person name="DeBoy R.T."/>
            <person name="Durkin A.S."/>
            <person name="Gwinn Giglio M."/>
            <person name="Madupu R."/>
            <person name="Nelson W.C."/>
            <person name="Rosovitz M.J."/>
            <person name="Sullivan S.A."/>
            <person name="Crabtree J."/>
            <person name="Creasy T."/>
            <person name="Davidsen T.M."/>
            <person name="Haft D.H."/>
            <person name="Zafar N."/>
            <person name="Zhou L."/>
            <person name="Halpin R."/>
            <person name="Holley T."/>
            <person name="Khouri H.M."/>
            <person name="Feldblyum T.V."/>
            <person name="White O."/>
            <person name="Fraser C.M."/>
            <person name="Chatterjee A.K."/>
            <person name="Cartinhour S."/>
            <person name="Schneider D."/>
            <person name="Mansfield J.W."/>
            <person name="Collmer A."/>
            <person name="Buell R."/>
        </authorList>
    </citation>
    <scope>NUCLEOTIDE SEQUENCE [LARGE SCALE GENOMIC DNA]</scope>
    <source>
        <strain>1448A / Race 6</strain>
    </source>
</reference>
<feature type="chain" id="PRO_0000230421" description="Small ribosomal subunit protein uS11">
    <location>
        <begin position="1"/>
        <end position="129"/>
    </location>
</feature>
<accession>Q48D59</accession>
<evidence type="ECO:0000255" key="1">
    <source>
        <dbReference type="HAMAP-Rule" id="MF_01310"/>
    </source>
</evidence>
<evidence type="ECO:0000305" key="2"/>
<gene>
    <name evidence="1" type="primary">rpsK</name>
    <name type="ordered locus">PSPPH_4569</name>
</gene>
<keyword id="KW-0687">Ribonucleoprotein</keyword>
<keyword id="KW-0689">Ribosomal protein</keyword>
<keyword id="KW-0694">RNA-binding</keyword>
<keyword id="KW-0699">rRNA-binding</keyword>
<comment type="function">
    <text evidence="1">Located on the platform of the 30S subunit, it bridges several disparate RNA helices of the 16S rRNA. Forms part of the Shine-Dalgarno cleft in the 70S ribosome.</text>
</comment>
<comment type="subunit">
    <text evidence="1">Part of the 30S ribosomal subunit. Interacts with proteins S7 and S18. Binds to IF-3.</text>
</comment>
<comment type="similarity">
    <text evidence="1">Belongs to the universal ribosomal protein uS11 family.</text>
</comment>
<name>RS11_PSE14</name>
<protein>
    <recommendedName>
        <fullName evidence="1">Small ribosomal subunit protein uS11</fullName>
    </recommendedName>
    <alternativeName>
        <fullName evidence="2">30S ribosomal protein S11</fullName>
    </alternativeName>
</protein>
<sequence length="129" mass="13616">MAKPAARPRKKVKKTVVDGIAHIHASFNNTIVTITDRQGNALSWATSGGSGFRGSRKSTPFAAQVAAERAGQAALEYGLKNLDVNVKGPGPGRESAVRALNGCGYKIASITDVTPIPHNGCRPPKKRRV</sequence>
<dbReference type="EMBL" id="CP000058">
    <property type="protein sequence ID" value="AAZ35435.1"/>
    <property type="molecule type" value="Genomic_DNA"/>
</dbReference>
<dbReference type="RefSeq" id="WP_002555466.1">
    <property type="nucleotide sequence ID" value="NC_005773.3"/>
</dbReference>
<dbReference type="SMR" id="Q48D59"/>
<dbReference type="GeneID" id="98285415"/>
<dbReference type="KEGG" id="psp:PSPPH_4569"/>
<dbReference type="eggNOG" id="COG0100">
    <property type="taxonomic scope" value="Bacteria"/>
</dbReference>
<dbReference type="HOGENOM" id="CLU_072439_5_0_6"/>
<dbReference type="Proteomes" id="UP000000551">
    <property type="component" value="Chromosome"/>
</dbReference>
<dbReference type="GO" id="GO:1990904">
    <property type="term" value="C:ribonucleoprotein complex"/>
    <property type="evidence" value="ECO:0007669"/>
    <property type="project" value="UniProtKB-KW"/>
</dbReference>
<dbReference type="GO" id="GO:0005840">
    <property type="term" value="C:ribosome"/>
    <property type="evidence" value="ECO:0007669"/>
    <property type="project" value="UniProtKB-KW"/>
</dbReference>
<dbReference type="GO" id="GO:0019843">
    <property type="term" value="F:rRNA binding"/>
    <property type="evidence" value="ECO:0007669"/>
    <property type="project" value="UniProtKB-UniRule"/>
</dbReference>
<dbReference type="GO" id="GO:0003735">
    <property type="term" value="F:structural constituent of ribosome"/>
    <property type="evidence" value="ECO:0007669"/>
    <property type="project" value="InterPro"/>
</dbReference>
<dbReference type="GO" id="GO:0006412">
    <property type="term" value="P:translation"/>
    <property type="evidence" value="ECO:0007669"/>
    <property type="project" value="UniProtKB-UniRule"/>
</dbReference>
<dbReference type="FunFam" id="3.30.420.80:FF:000001">
    <property type="entry name" value="30S ribosomal protein S11"/>
    <property type="match status" value="1"/>
</dbReference>
<dbReference type="Gene3D" id="3.30.420.80">
    <property type="entry name" value="Ribosomal protein S11"/>
    <property type="match status" value="1"/>
</dbReference>
<dbReference type="HAMAP" id="MF_01310">
    <property type="entry name" value="Ribosomal_uS11"/>
    <property type="match status" value="1"/>
</dbReference>
<dbReference type="InterPro" id="IPR001971">
    <property type="entry name" value="Ribosomal_uS11"/>
</dbReference>
<dbReference type="InterPro" id="IPR019981">
    <property type="entry name" value="Ribosomal_uS11_bac-type"/>
</dbReference>
<dbReference type="InterPro" id="IPR018102">
    <property type="entry name" value="Ribosomal_uS11_CS"/>
</dbReference>
<dbReference type="InterPro" id="IPR036967">
    <property type="entry name" value="Ribosomal_uS11_sf"/>
</dbReference>
<dbReference type="NCBIfam" id="NF003698">
    <property type="entry name" value="PRK05309.1"/>
    <property type="match status" value="1"/>
</dbReference>
<dbReference type="NCBIfam" id="TIGR03632">
    <property type="entry name" value="uS11_bact"/>
    <property type="match status" value="1"/>
</dbReference>
<dbReference type="PANTHER" id="PTHR11759">
    <property type="entry name" value="40S RIBOSOMAL PROTEIN S14/30S RIBOSOMAL PROTEIN S11"/>
    <property type="match status" value="1"/>
</dbReference>
<dbReference type="Pfam" id="PF00411">
    <property type="entry name" value="Ribosomal_S11"/>
    <property type="match status" value="1"/>
</dbReference>
<dbReference type="PIRSF" id="PIRSF002131">
    <property type="entry name" value="Ribosomal_S11"/>
    <property type="match status" value="1"/>
</dbReference>
<dbReference type="SUPFAM" id="SSF53137">
    <property type="entry name" value="Translational machinery components"/>
    <property type="match status" value="1"/>
</dbReference>
<dbReference type="PROSITE" id="PS00054">
    <property type="entry name" value="RIBOSOMAL_S11"/>
    <property type="match status" value="1"/>
</dbReference>
<organism>
    <name type="scientific">Pseudomonas savastanoi pv. phaseolicola (strain 1448A / Race 6)</name>
    <name type="common">Pseudomonas syringae pv. phaseolicola (strain 1448A / Race 6)</name>
    <dbReference type="NCBI Taxonomy" id="264730"/>
    <lineage>
        <taxon>Bacteria</taxon>
        <taxon>Pseudomonadati</taxon>
        <taxon>Pseudomonadota</taxon>
        <taxon>Gammaproteobacteria</taxon>
        <taxon>Pseudomonadales</taxon>
        <taxon>Pseudomonadaceae</taxon>
        <taxon>Pseudomonas</taxon>
    </lineage>
</organism>
<proteinExistence type="inferred from homology"/>